<keyword id="KW-0067">ATP-binding</keyword>
<keyword id="KW-0963">Cytoplasm</keyword>
<keyword id="KW-0324">Glycolysis</keyword>
<keyword id="KW-0418">Kinase</keyword>
<keyword id="KW-0547">Nucleotide-binding</keyword>
<keyword id="KW-1185">Reference proteome</keyword>
<keyword id="KW-0808">Transferase</keyword>
<dbReference type="EC" id="2.7.1.2" evidence="1"/>
<dbReference type="EMBL" id="CU928161">
    <property type="protein sequence ID" value="CAR03857.1"/>
    <property type="molecule type" value="Genomic_DNA"/>
</dbReference>
<dbReference type="RefSeq" id="WP_000170355.1">
    <property type="nucleotide sequence ID" value="NC_011742.1"/>
</dbReference>
<dbReference type="SMR" id="B7MH48"/>
<dbReference type="KEGG" id="ecz:ECS88_2583"/>
<dbReference type="HOGENOM" id="CLU_042582_1_0_6"/>
<dbReference type="Proteomes" id="UP000000747">
    <property type="component" value="Chromosome"/>
</dbReference>
<dbReference type="GO" id="GO:0005829">
    <property type="term" value="C:cytosol"/>
    <property type="evidence" value="ECO:0007669"/>
    <property type="project" value="TreeGrafter"/>
</dbReference>
<dbReference type="GO" id="GO:0005524">
    <property type="term" value="F:ATP binding"/>
    <property type="evidence" value="ECO:0007669"/>
    <property type="project" value="UniProtKB-UniRule"/>
</dbReference>
<dbReference type="GO" id="GO:0005536">
    <property type="term" value="F:D-glucose binding"/>
    <property type="evidence" value="ECO:0007669"/>
    <property type="project" value="InterPro"/>
</dbReference>
<dbReference type="GO" id="GO:0004340">
    <property type="term" value="F:glucokinase activity"/>
    <property type="evidence" value="ECO:0007669"/>
    <property type="project" value="UniProtKB-UniRule"/>
</dbReference>
<dbReference type="GO" id="GO:0006096">
    <property type="term" value="P:glycolytic process"/>
    <property type="evidence" value="ECO:0007669"/>
    <property type="project" value="UniProtKB-UniRule"/>
</dbReference>
<dbReference type="CDD" id="cd24008">
    <property type="entry name" value="ASKHA_NBD_GLK"/>
    <property type="match status" value="1"/>
</dbReference>
<dbReference type="FunFam" id="3.30.420.40:FF:000045">
    <property type="entry name" value="Glucokinase"/>
    <property type="match status" value="1"/>
</dbReference>
<dbReference type="FunFam" id="3.40.367.20:FF:000002">
    <property type="entry name" value="Glucokinase"/>
    <property type="match status" value="1"/>
</dbReference>
<dbReference type="Gene3D" id="3.30.420.40">
    <property type="match status" value="1"/>
</dbReference>
<dbReference type="Gene3D" id="3.40.367.20">
    <property type="match status" value="1"/>
</dbReference>
<dbReference type="HAMAP" id="MF_00524">
    <property type="entry name" value="Glucokinase"/>
    <property type="match status" value="1"/>
</dbReference>
<dbReference type="InterPro" id="IPR043129">
    <property type="entry name" value="ATPase_NBD"/>
</dbReference>
<dbReference type="InterPro" id="IPR050201">
    <property type="entry name" value="Bacterial_glucokinase"/>
</dbReference>
<dbReference type="InterPro" id="IPR003836">
    <property type="entry name" value="Glucokinase"/>
</dbReference>
<dbReference type="NCBIfam" id="TIGR00749">
    <property type="entry name" value="glk"/>
    <property type="match status" value="1"/>
</dbReference>
<dbReference type="NCBIfam" id="NF001414">
    <property type="entry name" value="PRK00292.1-1"/>
    <property type="match status" value="1"/>
</dbReference>
<dbReference type="NCBIfam" id="NF001416">
    <property type="entry name" value="PRK00292.1-3"/>
    <property type="match status" value="1"/>
</dbReference>
<dbReference type="PANTHER" id="PTHR47690">
    <property type="entry name" value="GLUCOKINASE"/>
    <property type="match status" value="1"/>
</dbReference>
<dbReference type="PANTHER" id="PTHR47690:SF1">
    <property type="entry name" value="GLUCOKINASE"/>
    <property type="match status" value="1"/>
</dbReference>
<dbReference type="Pfam" id="PF02685">
    <property type="entry name" value="Glucokinase"/>
    <property type="match status" value="1"/>
</dbReference>
<dbReference type="SUPFAM" id="SSF53067">
    <property type="entry name" value="Actin-like ATPase domain"/>
    <property type="match status" value="1"/>
</dbReference>
<evidence type="ECO:0000255" key="1">
    <source>
        <dbReference type="HAMAP-Rule" id="MF_00524"/>
    </source>
</evidence>
<protein>
    <recommendedName>
        <fullName evidence="1">Glucokinase</fullName>
        <ecNumber evidence="1">2.7.1.2</ecNumber>
    </recommendedName>
    <alternativeName>
        <fullName evidence="1">Glucose kinase</fullName>
    </alternativeName>
</protein>
<name>GLK_ECO45</name>
<sequence>MTKYALVGDVGGTNARLALCDIASGEISQAKTYSGLDYPSLEAVIRVYLEEHKVEVKDGCIAIACPITGDWVAMTNHTWAFSIAEMKKNLGFSHLEIINDFTAVSMAIPMLKKEHLIQFGGAEPVEGKPIAVYGAGTGLGVAHLVHVDKRWVSLPGEGGHVDFAPNSEEEGIILEILRAEIGHVSAERVLSGPGLVNLYRAIVKADNRLPENLKPKDITERALADSCTDCRRALSLFCVIMGRFGGNLALNLGTFGGVFIAGGIVPRFLEFFKASGFRAAFEDKGRFKEYVHDIPVYLIVHDNPGLLGSGAHLRQTLGHIL</sequence>
<feature type="chain" id="PRO_1000127699" description="Glucokinase">
    <location>
        <begin position="1"/>
        <end position="321"/>
    </location>
</feature>
<feature type="binding site" evidence="1">
    <location>
        <begin position="8"/>
        <end position="13"/>
    </location>
    <ligand>
        <name>ATP</name>
        <dbReference type="ChEBI" id="CHEBI:30616"/>
    </ligand>
</feature>
<comment type="catalytic activity">
    <reaction evidence="1">
        <text>D-glucose + ATP = D-glucose 6-phosphate + ADP + H(+)</text>
        <dbReference type="Rhea" id="RHEA:17825"/>
        <dbReference type="ChEBI" id="CHEBI:4167"/>
        <dbReference type="ChEBI" id="CHEBI:15378"/>
        <dbReference type="ChEBI" id="CHEBI:30616"/>
        <dbReference type="ChEBI" id="CHEBI:61548"/>
        <dbReference type="ChEBI" id="CHEBI:456216"/>
        <dbReference type="EC" id="2.7.1.2"/>
    </reaction>
</comment>
<comment type="subcellular location">
    <subcellularLocation>
        <location evidence="1">Cytoplasm</location>
    </subcellularLocation>
</comment>
<comment type="similarity">
    <text evidence="1">Belongs to the bacterial glucokinase family.</text>
</comment>
<gene>
    <name evidence="1" type="primary">glk</name>
    <name type="ordered locus">ECS88_2583</name>
</gene>
<reference key="1">
    <citation type="journal article" date="2009" name="PLoS Genet.">
        <title>Organised genome dynamics in the Escherichia coli species results in highly diverse adaptive paths.</title>
        <authorList>
            <person name="Touchon M."/>
            <person name="Hoede C."/>
            <person name="Tenaillon O."/>
            <person name="Barbe V."/>
            <person name="Baeriswyl S."/>
            <person name="Bidet P."/>
            <person name="Bingen E."/>
            <person name="Bonacorsi S."/>
            <person name="Bouchier C."/>
            <person name="Bouvet O."/>
            <person name="Calteau A."/>
            <person name="Chiapello H."/>
            <person name="Clermont O."/>
            <person name="Cruveiller S."/>
            <person name="Danchin A."/>
            <person name="Diard M."/>
            <person name="Dossat C."/>
            <person name="Karoui M.E."/>
            <person name="Frapy E."/>
            <person name="Garry L."/>
            <person name="Ghigo J.M."/>
            <person name="Gilles A.M."/>
            <person name="Johnson J."/>
            <person name="Le Bouguenec C."/>
            <person name="Lescat M."/>
            <person name="Mangenot S."/>
            <person name="Martinez-Jehanne V."/>
            <person name="Matic I."/>
            <person name="Nassif X."/>
            <person name="Oztas S."/>
            <person name="Petit M.A."/>
            <person name="Pichon C."/>
            <person name="Rouy Z."/>
            <person name="Ruf C.S."/>
            <person name="Schneider D."/>
            <person name="Tourret J."/>
            <person name="Vacherie B."/>
            <person name="Vallenet D."/>
            <person name="Medigue C."/>
            <person name="Rocha E.P.C."/>
            <person name="Denamur E."/>
        </authorList>
    </citation>
    <scope>NUCLEOTIDE SEQUENCE [LARGE SCALE GENOMIC DNA]</scope>
    <source>
        <strain>S88 / ExPEC</strain>
    </source>
</reference>
<proteinExistence type="inferred from homology"/>
<organism>
    <name type="scientific">Escherichia coli O45:K1 (strain S88 / ExPEC)</name>
    <dbReference type="NCBI Taxonomy" id="585035"/>
    <lineage>
        <taxon>Bacteria</taxon>
        <taxon>Pseudomonadati</taxon>
        <taxon>Pseudomonadota</taxon>
        <taxon>Gammaproteobacteria</taxon>
        <taxon>Enterobacterales</taxon>
        <taxon>Enterobacteriaceae</taxon>
        <taxon>Escherichia</taxon>
    </lineage>
</organism>
<accession>B7MH48</accession>